<comment type="catalytic activity">
    <reaction evidence="1">
        <text>beta-D-fructose 1,6-bisphosphate + H2O = beta-D-fructose 6-phosphate + phosphate</text>
        <dbReference type="Rhea" id="RHEA:11064"/>
        <dbReference type="ChEBI" id="CHEBI:15377"/>
        <dbReference type="ChEBI" id="CHEBI:32966"/>
        <dbReference type="ChEBI" id="CHEBI:43474"/>
        <dbReference type="ChEBI" id="CHEBI:57634"/>
        <dbReference type="EC" id="3.1.3.11"/>
    </reaction>
</comment>
<comment type="cofactor">
    <cofactor evidence="1">
        <name>Mg(2+)</name>
        <dbReference type="ChEBI" id="CHEBI:18420"/>
    </cofactor>
    <text evidence="1">Binds 2 magnesium ions per subunit.</text>
</comment>
<comment type="pathway">
    <text evidence="1">Carbohydrate biosynthesis; gluconeogenesis.</text>
</comment>
<comment type="subunit">
    <text evidence="1">Homotetramer.</text>
</comment>
<comment type="subcellular location">
    <subcellularLocation>
        <location evidence="1">Cytoplasm</location>
    </subcellularLocation>
</comment>
<comment type="similarity">
    <text evidence="1">Belongs to the FBPase class 1 family.</text>
</comment>
<proteinExistence type="inferred from homology"/>
<reference key="1">
    <citation type="submission" date="1994-01" db="EMBL/GenBank/DDBJ databases">
        <title>Cloning, sequence analysis, expression in E. coli, and genome organization of some Calvin cycle genes from Nitrobacter vulgaris T3.</title>
        <authorList>
            <person name="Strecker M."/>
            <person name="Sickinger E."/>
            <person name="English R.S."/>
            <person name="Shively J.M."/>
            <person name="Bock E."/>
        </authorList>
    </citation>
    <scope>NUCLEOTIDE SEQUENCE [GENOMIC DNA]</scope>
    <source>
        <strain>T3</strain>
    </source>
</reference>
<feature type="chain" id="PRO_0000200482" description="Fructose-1,6-bisphosphatase class 1">
    <location>
        <begin position="1"/>
        <end position="344"/>
    </location>
</feature>
<feature type="binding site" evidence="1">
    <location>
        <position position="90"/>
    </location>
    <ligand>
        <name>Mg(2+)</name>
        <dbReference type="ChEBI" id="CHEBI:18420"/>
        <label>1</label>
    </ligand>
</feature>
<feature type="binding site" evidence="1">
    <location>
        <position position="109"/>
    </location>
    <ligand>
        <name>Mg(2+)</name>
        <dbReference type="ChEBI" id="CHEBI:18420"/>
        <label>1</label>
    </ligand>
</feature>
<feature type="binding site" evidence="1">
    <location>
        <position position="109"/>
    </location>
    <ligand>
        <name>Mg(2+)</name>
        <dbReference type="ChEBI" id="CHEBI:18420"/>
        <label>2</label>
    </ligand>
</feature>
<feature type="binding site" evidence="1">
    <location>
        <position position="111"/>
    </location>
    <ligand>
        <name>Mg(2+)</name>
        <dbReference type="ChEBI" id="CHEBI:18420"/>
        <label>1</label>
    </ligand>
</feature>
<feature type="binding site" evidence="1">
    <location>
        <begin position="112"/>
        <end position="115"/>
    </location>
    <ligand>
        <name>substrate</name>
    </ligand>
</feature>
<feature type="binding site" evidence="1">
    <location>
        <position position="112"/>
    </location>
    <ligand>
        <name>Mg(2+)</name>
        <dbReference type="ChEBI" id="CHEBI:18420"/>
        <label>2</label>
    </ligand>
</feature>
<feature type="binding site" evidence="1">
    <location>
        <position position="200"/>
    </location>
    <ligand>
        <name>substrate</name>
    </ligand>
</feature>
<feature type="binding site" evidence="1">
    <location>
        <position position="271"/>
    </location>
    <ligand>
        <name>Mg(2+)</name>
        <dbReference type="ChEBI" id="CHEBI:18420"/>
        <label>2</label>
    </ligand>
</feature>
<gene>
    <name evidence="1" type="primary">fbp</name>
    <name type="synonym">cbbF</name>
</gene>
<name>F16PA_NITVU</name>
<accession>P37099</accession>
<sequence>MSQELTLQQRMDGEAGSDPLRQAVKEAVAALARAAVDISDLTCRGALAGITGQAQGRNTDGDIQKDLDVRADQIIRDALGKLPIAALASEEMADLDILNPAAPICVAFDPLDGSSNINTNMSVGTIFSIMPTPSDVNAAFRQAGSAQLAAGFVVYGPQTSLVLTLGRGVDIFTLDRADRVFKLTGSSVQIPTDANEFAINASNRRHWDLPVRAYIDECLAGADGPCGKNFNMRWIGSLVAEAFRILIRGGIFLYPGDARDGYEEGRLVVYEAHPMAFIVEQAGGGASTGRKRVLDIVPDSLHQRVPLIMGSIKNVQRLEHMHTVPDVALEANAPLFGNRGLFRV</sequence>
<protein>
    <recommendedName>
        <fullName evidence="1">Fructose-1,6-bisphosphatase class 1</fullName>
        <shortName evidence="1">FBPase class 1</shortName>
        <ecNumber evidence="1">3.1.3.11</ecNumber>
    </recommendedName>
    <alternativeName>
        <fullName evidence="1">D-fructose-1,6-bisphosphate 1-phosphohydrolase class 1</fullName>
    </alternativeName>
</protein>
<dbReference type="EC" id="3.1.3.11" evidence="1"/>
<dbReference type="EMBL" id="L22884">
    <property type="protein sequence ID" value="AAA25505.1"/>
    <property type="molecule type" value="Genomic_DNA"/>
</dbReference>
<dbReference type="SMR" id="P37099"/>
<dbReference type="STRING" id="29421.B2M20_17185"/>
<dbReference type="UniPathway" id="UPA00138"/>
<dbReference type="GO" id="GO:0005829">
    <property type="term" value="C:cytosol"/>
    <property type="evidence" value="ECO:0007669"/>
    <property type="project" value="TreeGrafter"/>
</dbReference>
<dbReference type="GO" id="GO:0042132">
    <property type="term" value="F:fructose 1,6-bisphosphate 1-phosphatase activity"/>
    <property type="evidence" value="ECO:0007669"/>
    <property type="project" value="UniProtKB-UniRule"/>
</dbReference>
<dbReference type="GO" id="GO:0000287">
    <property type="term" value="F:magnesium ion binding"/>
    <property type="evidence" value="ECO:0007669"/>
    <property type="project" value="UniProtKB-UniRule"/>
</dbReference>
<dbReference type="GO" id="GO:0030388">
    <property type="term" value="P:fructose 1,6-bisphosphate metabolic process"/>
    <property type="evidence" value="ECO:0007669"/>
    <property type="project" value="TreeGrafter"/>
</dbReference>
<dbReference type="GO" id="GO:0006002">
    <property type="term" value="P:fructose 6-phosphate metabolic process"/>
    <property type="evidence" value="ECO:0007669"/>
    <property type="project" value="TreeGrafter"/>
</dbReference>
<dbReference type="GO" id="GO:0006000">
    <property type="term" value="P:fructose metabolic process"/>
    <property type="evidence" value="ECO:0007669"/>
    <property type="project" value="TreeGrafter"/>
</dbReference>
<dbReference type="GO" id="GO:0006094">
    <property type="term" value="P:gluconeogenesis"/>
    <property type="evidence" value="ECO:0007669"/>
    <property type="project" value="UniProtKB-UniRule"/>
</dbReference>
<dbReference type="GO" id="GO:0005986">
    <property type="term" value="P:sucrose biosynthetic process"/>
    <property type="evidence" value="ECO:0007669"/>
    <property type="project" value="TreeGrafter"/>
</dbReference>
<dbReference type="CDD" id="cd00354">
    <property type="entry name" value="FBPase"/>
    <property type="match status" value="1"/>
</dbReference>
<dbReference type="FunFam" id="3.40.190.80:FF:000011">
    <property type="entry name" value="Fructose-1,6-bisphosphatase class 1"/>
    <property type="match status" value="1"/>
</dbReference>
<dbReference type="Gene3D" id="3.40.190.80">
    <property type="match status" value="1"/>
</dbReference>
<dbReference type="Gene3D" id="3.30.540.10">
    <property type="entry name" value="Fructose-1,6-Bisphosphatase, subunit A, domain 1"/>
    <property type="match status" value="1"/>
</dbReference>
<dbReference type="HAMAP" id="MF_01855">
    <property type="entry name" value="FBPase_class1"/>
    <property type="match status" value="1"/>
</dbReference>
<dbReference type="InterPro" id="IPR044015">
    <property type="entry name" value="FBPase_C_dom"/>
</dbReference>
<dbReference type="InterPro" id="IPR000146">
    <property type="entry name" value="FBPase_class-1"/>
</dbReference>
<dbReference type="InterPro" id="IPR033391">
    <property type="entry name" value="FBPase_N"/>
</dbReference>
<dbReference type="InterPro" id="IPR028343">
    <property type="entry name" value="FBPtase"/>
</dbReference>
<dbReference type="InterPro" id="IPR020548">
    <property type="entry name" value="Fructose_bisphosphatase_AS"/>
</dbReference>
<dbReference type="NCBIfam" id="NF006779">
    <property type="entry name" value="PRK09293.1-3"/>
    <property type="match status" value="1"/>
</dbReference>
<dbReference type="NCBIfam" id="NF006780">
    <property type="entry name" value="PRK09293.1-4"/>
    <property type="match status" value="1"/>
</dbReference>
<dbReference type="PANTHER" id="PTHR11556">
    <property type="entry name" value="FRUCTOSE-1,6-BISPHOSPHATASE-RELATED"/>
    <property type="match status" value="1"/>
</dbReference>
<dbReference type="PANTHER" id="PTHR11556:SF35">
    <property type="entry name" value="SEDOHEPTULOSE-1,7-BISPHOSPHATASE, CHLOROPLASTIC"/>
    <property type="match status" value="1"/>
</dbReference>
<dbReference type="Pfam" id="PF00316">
    <property type="entry name" value="FBPase"/>
    <property type="match status" value="1"/>
</dbReference>
<dbReference type="Pfam" id="PF18913">
    <property type="entry name" value="FBPase_C"/>
    <property type="match status" value="1"/>
</dbReference>
<dbReference type="PIRSF" id="PIRSF500210">
    <property type="entry name" value="FBPtase"/>
    <property type="match status" value="1"/>
</dbReference>
<dbReference type="PIRSF" id="PIRSF000904">
    <property type="entry name" value="FBPtase_SBPase"/>
    <property type="match status" value="1"/>
</dbReference>
<dbReference type="PRINTS" id="PR00115">
    <property type="entry name" value="F16BPHPHTASE"/>
</dbReference>
<dbReference type="SUPFAM" id="SSF56655">
    <property type="entry name" value="Carbohydrate phosphatase"/>
    <property type="match status" value="1"/>
</dbReference>
<dbReference type="PROSITE" id="PS00124">
    <property type="entry name" value="FBPASE"/>
    <property type="match status" value="1"/>
</dbReference>
<keyword id="KW-0119">Carbohydrate metabolism</keyword>
<keyword id="KW-0963">Cytoplasm</keyword>
<keyword id="KW-0378">Hydrolase</keyword>
<keyword id="KW-0460">Magnesium</keyword>
<keyword id="KW-0479">Metal-binding</keyword>
<evidence type="ECO:0000255" key="1">
    <source>
        <dbReference type="HAMAP-Rule" id="MF_01855"/>
    </source>
</evidence>
<organism>
    <name type="scientific">Nitrobacter vulgaris</name>
    <dbReference type="NCBI Taxonomy" id="29421"/>
    <lineage>
        <taxon>Bacteria</taxon>
        <taxon>Pseudomonadati</taxon>
        <taxon>Pseudomonadota</taxon>
        <taxon>Alphaproteobacteria</taxon>
        <taxon>Hyphomicrobiales</taxon>
        <taxon>Nitrobacteraceae</taxon>
        <taxon>Nitrobacter</taxon>
    </lineage>
</organism>